<name>DNAK_GLOVI</name>
<organism>
    <name type="scientific">Gloeobacter violaceus (strain ATCC 29082 / PCC 7421)</name>
    <dbReference type="NCBI Taxonomy" id="251221"/>
    <lineage>
        <taxon>Bacteria</taxon>
        <taxon>Bacillati</taxon>
        <taxon>Cyanobacteriota</taxon>
        <taxon>Cyanophyceae</taxon>
        <taxon>Gloeobacterales</taxon>
        <taxon>Gloeobacteraceae</taxon>
        <taxon>Gloeobacter</taxon>
    </lineage>
</organism>
<accession>Q7NDH1</accession>
<keyword id="KW-0067">ATP-binding</keyword>
<keyword id="KW-0143">Chaperone</keyword>
<keyword id="KW-0547">Nucleotide-binding</keyword>
<keyword id="KW-0597">Phosphoprotein</keyword>
<keyword id="KW-1185">Reference proteome</keyword>
<keyword id="KW-0346">Stress response</keyword>
<sequence length="638" mass="68270">MGKVVGIDLGTTNSVVAVLEGGQPTVIANAEGSRTTPSVVAFTKNHDRLVGQLARRQAVLNPENTFYSVKRFIGRKYDEITDEAKQVAYRVVRDGSNVKLHSTNEDKDFAPEEISALVLRKLVDDASKYLGEKITQAVITVPAYFNDSQRQATKDAGRIAGIEVLRIINEPTAAALAYGLDKKANETILVFDLGGGTFDVSILEVGDGVFEVKSTSGDTHLGGDDFDRRIVDYLADEFKKLEGVDLRTDRQALQRLTEAAEKAKIELSGVTQTQINLPFITAGADGAKHLDMSLTRAKFESLCADLLRRVEKPVEQALRDAKLSKENIDEVVLVGGSTRIPAVQELVKRIIGKDPNQSVNPDEVVAVGAAIQAGVLSGEVRDVVLLDVTPLSLGVETLGGVATPIIPRNTTIPTRKSETFSTAADGQTSVEIHVIQGERSMAGDNKSLGRFRLDGIPPAPRGVPQVEVTFDIDANGILSVTAKDKASGKAQTISITGASTLSKDDVAKMVNEAESFAGEDKKRREAVDLKNEADSLAYQAERQLTEFGDKVDSSDKSKIEGLIKDLREALSREDMDKVASLKADLQQAVYDLSSKLYQQSAPSGAAAGPDEGAPSGSGGTSGTRGGDDVIDAEFTETK</sequence>
<dbReference type="EMBL" id="BA000045">
    <property type="protein sequence ID" value="BAC92205.1"/>
    <property type="molecule type" value="Genomic_DNA"/>
</dbReference>
<dbReference type="RefSeq" id="NP_927210.1">
    <property type="nucleotide sequence ID" value="NC_005125.1"/>
</dbReference>
<dbReference type="RefSeq" id="WP_011144248.1">
    <property type="nucleotide sequence ID" value="NC_005125.1"/>
</dbReference>
<dbReference type="SMR" id="Q7NDH1"/>
<dbReference type="FunCoup" id="Q7NDH1">
    <property type="interactions" value="355"/>
</dbReference>
<dbReference type="STRING" id="251221.gene:10761783"/>
<dbReference type="EnsemblBacteria" id="BAC92205">
    <property type="protein sequence ID" value="BAC92205"/>
    <property type="gene ID" value="BAC92205"/>
</dbReference>
<dbReference type="KEGG" id="gvi:glr4264"/>
<dbReference type="PATRIC" id="fig|251221.4.peg.4293"/>
<dbReference type="eggNOG" id="COG0443">
    <property type="taxonomic scope" value="Bacteria"/>
</dbReference>
<dbReference type="HOGENOM" id="CLU_005965_2_1_3"/>
<dbReference type="InParanoid" id="Q7NDH1"/>
<dbReference type="OrthoDB" id="9766019at2"/>
<dbReference type="PhylomeDB" id="Q7NDH1"/>
<dbReference type="Proteomes" id="UP000000557">
    <property type="component" value="Chromosome"/>
</dbReference>
<dbReference type="GO" id="GO:0005524">
    <property type="term" value="F:ATP binding"/>
    <property type="evidence" value="ECO:0007669"/>
    <property type="project" value="UniProtKB-UniRule"/>
</dbReference>
<dbReference type="GO" id="GO:0016887">
    <property type="term" value="F:ATP hydrolysis activity"/>
    <property type="evidence" value="ECO:0000318"/>
    <property type="project" value="GO_Central"/>
</dbReference>
<dbReference type="GO" id="GO:0140662">
    <property type="term" value="F:ATP-dependent protein folding chaperone"/>
    <property type="evidence" value="ECO:0007669"/>
    <property type="project" value="InterPro"/>
</dbReference>
<dbReference type="GO" id="GO:0031072">
    <property type="term" value="F:heat shock protein binding"/>
    <property type="evidence" value="ECO:0000318"/>
    <property type="project" value="GO_Central"/>
</dbReference>
<dbReference type="GO" id="GO:0044183">
    <property type="term" value="F:protein folding chaperone"/>
    <property type="evidence" value="ECO:0000318"/>
    <property type="project" value="GO_Central"/>
</dbReference>
<dbReference type="GO" id="GO:0051082">
    <property type="term" value="F:unfolded protein binding"/>
    <property type="evidence" value="ECO:0007669"/>
    <property type="project" value="InterPro"/>
</dbReference>
<dbReference type="GO" id="GO:0051085">
    <property type="term" value="P:chaperone cofactor-dependent protein refolding"/>
    <property type="evidence" value="ECO:0000318"/>
    <property type="project" value="GO_Central"/>
</dbReference>
<dbReference type="GO" id="GO:0042026">
    <property type="term" value="P:protein refolding"/>
    <property type="evidence" value="ECO:0000318"/>
    <property type="project" value="GO_Central"/>
</dbReference>
<dbReference type="CDD" id="cd10234">
    <property type="entry name" value="ASKHA_NBD_HSP70_DnaK-like"/>
    <property type="match status" value="1"/>
</dbReference>
<dbReference type="FunFam" id="2.60.34.10:FF:000014">
    <property type="entry name" value="Chaperone protein DnaK HSP70"/>
    <property type="match status" value="1"/>
</dbReference>
<dbReference type="FunFam" id="1.20.1270.10:FF:000001">
    <property type="entry name" value="Molecular chaperone DnaK"/>
    <property type="match status" value="1"/>
</dbReference>
<dbReference type="FunFam" id="3.30.420.40:FF:000004">
    <property type="entry name" value="Molecular chaperone DnaK"/>
    <property type="match status" value="1"/>
</dbReference>
<dbReference type="FunFam" id="3.90.640.10:FF:000003">
    <property type="entry name" value="Molecular chaperone DnaK"/>
    <property type="match status" value="1"/>
</dbReference>
<dbReference type="Gene3D" id="1.20.1270.10">
    <property type="match status" value="1"/>
</dbReference>
<dbReference type="Gene3D" id="3.30.420.40">
    <property type="match status" value="2"/>
</dbReference>
<dbReference type="Gene3D" id="3.90.640.10">
    <property type="entry name" value="Actin, Chain A, domain 4"/>
    <property type="match status" value="1"/>
</dbReference>
<dbReference type="Gene3D" id="2.60.34.10">
    <property type="entry name" value="Substrate Binding Domain Of DNAk, Chain A, domain 1"/>
    <property type="match status" value="1"/>
</dbReference>
<dbReference type="HAMAP" id="MF_00332">
    <property type="entry name" value="DnaK"/>
    <property type="match status" value="1"/>
</dbReference>
<dbReference type="InterPro" id="IPR043129">
    <property type="entry name" value="ATPase_NBD"/>
</dbReference>
<dbReference type="InterPro" id="IPR012725">
    <property type="entry name" value="Chaperone_DnaK"/>
</dbReference>
<dbReference type="InterPro" id="IPR018181">
    <property type="entry name" value="Heat_shock_70_CS"/>
</dbReference>
<dbReference type="InterPro" id="IPR029048">
    <property type="entry name" value="HSP70_C_sf"/>
</dbReference>
<dbReference type="InterPro" id="IPR029047">
    <property type="entry name" value="HSP70_peptide-bd_sf"/>
</dbReference>
<dbReference type="InterPro" id="IPR013126">
    <property type="entry name" value="Hsp_70_fam"/>
</dbReference>
<dbReference type="NCBIfam" id="NF001413">
    <property type="entry name" value="PRK00290.1"/>
    <property type="match status" value="1"/>
</dbReference>
<dbReference type="NCBIfam" id="NF003520">
    <property type="entry name" value="PRK05183.1"/>
    <property type="match status" value="1"/>
</dbReference>
<dbReference type="NCBIfam" id="TIGR02350">
    <property type="entry name" value="prok_dnaK"/>
    <property type="match status" value="1"/>
</dbReference>
<dbReference type="PANTHER" id="PTHR19375">
    <property type="entry name" value="HEAT SHOCK PROTEIN 70KDA"/>
    <property type="match status" value="1"/>
</dbReference>
<dbReference type="Pfam" id="PF00012">
    <property type="entry name" value="HSP70"/>
    <property type="match status" value="1"/>
</dbReference>
<dbReference type="PRINTS" id="PR00301">
    <property type="entry name" value="HEATSHOCK70"/>
</dbReference>
<dbReference type="SUPFAM" id="SSF53067">
    <property type="entry name" value="Actin-like ATPase domain"/>
    <property type="match status" value="2"/>
</dbReference>
<dbReference type="SUPFAM" id="SSF100934">
    <property type="entry name" value="Heat shock protein 70kD (HSP70), C-terminal subdomain"/>
    <property type="match status" value="1"/>
</dbReference>
<dbReference type="SUPFAM" id="SSF100920">
    <property type="entry name" value="Heat shock protein 70kD (HSP70), peptide-binding domain"/>
    <property type="match status" value="1"/>
</dbReference>
<dbReference type="PROSITE" id="PS00297">
    <property type="entry name" value="HSP70_1"/>
    <property type="match status" value="1"/>
</dbReference>
<dbReference type="PROSITE" id="PS00329">
    <property type="entry name" value="HSP70_2"/>
    <property type="match status" value="1"/>
</dbReference>
<dbReference type="PROSITE" id="PS01036">
    <property type="entry name" value="HSP70_3"/>
    <property type="match status" value="1"/>
</dbReference>
<gene>
    <name evidence="1" type="primary">dnaK</name>
    <name type="ordered locus">glr4264</name>
</gene>
<protein>
    <recommendedName>
        <fullName evidence="1">Chaperone protein DnaK</fullName>
    </recommendedName>
    <alternativeName>
        <fullName evidence="1">HSP70</fullName>
    </alternativeName>
    <alternativeName>
        <fullName evidence="1">Heat shock 70 kDa protein</fullName>
    </alternativeName>
    <alternativeName>
        <fullName evidence="1">Heat shock protein 70</fullName>
    </alternativeName>
</protein>
<comment type="function">
    <text evidence="1">Acts as a chaperone.</text>
</comment>
<comment type="induction">
    <text evidence="1">By stress conditions e.g. heat shock.</text>
</comment>
<comment type="similarity">
    <text evidence="1">Belongs to the heat shock protein 70 family.</text>
</comment>
<reference key="1">
    <citation type="journal article" date="2003" name="DNA Res.">
        <title>Complete genome structure of Gloeobacter violaceus PCC 7421, a cyanobacterium that lacks thylakoids.</title>
        <authorList>
            <person name="Nakamura Y."/>
            <person name="Kaneko T."/>
            <person name="Sato S."/>
            <person name="Mimuro M."/>
            <person name="Miyashita H."/>
            <person name="Tsuchiya T."/>
            <person name="Sasamoto S."/>
            <person name="Watanabe A."/>
            <person name="Kawashima K."/>
            <person name="Kishida Y."/>
            <person name="Kiyokawa C."/>
            <person name="Kohara M."/>
            <person name="Matsumoto M."/>
            <person name="Matsuno A."/>
            <person name="Nakazaki N."/>
            <person name="Shimpo S."/>
            <person name="Takeuchi C."/>
            <person name="Yamada M."/>
            <person name="Tabata S."/>
        </authorList>
    </citation>
    <scope>NUCLEOTIDE SEQUENCE [LARGE SCALE GENOMIC DNA]</scope>
    <source>
        <strain>ATCC 29082 / PCC 7421</strain>
    </source>
</reference>
<evidence type="ECO:0000255" key="1">
    <source>
        <dbReference type="HAMAP-Rule" id="MF_00332"/>
    </source>
</evidence>
<evidence type="ECO:0000256" key="2">
    <source>
        <dbReference type="SAM" id="MobiDB-lite"/>
    </source>
</evidence>
<feature type="chain" id="PRO_0000078466" description="Chaperone protein DnaK">
    <location>
        <begin position="1"/>
        <end position="638"/>
    </location>
</feature>
<feature type="region of interest" description="Disordered" evidence="2">
    <location>
        <begin position="598"/>
        <end position="638"/>
    </location>
</feature>
<feature type="compositionally biased region" description="Gly residues" evidence="2">
    <location>
        <begin position="615"/>
        <end position="624"/>
    </location>
</feature>
<feature type="compositionally biased region" description="Acidic residues" evidence="2">
    <location>
        <begin position="628"/>
        <end position="638"/>
    </location>
</feature>
<feature type="modified residue" description="Phosphothreonine; by autocatalysis" evidence="1">
    <location>
        <position position="197"/>
    </location>
</feature>
<proteinExistence type="inferred from homology"/>